<sequence length="234" mass="26574">MNKGFTFKQFHINIGLCGMPVSTDGVLLGAWANIEQSKNILDIGCGTGLLSLMSAQRNENSHVDAVELMPLAAEVALQNFVQSPWKNRLHLIHQDILHYHPAHLYDAIICNPPYFNNGEQSQKGERSIARHTDSLPFDKLLKCCKALMSSKGRASFILPFIEGNQFIEIAKKHSFHLTKLTKIQTTEKKDVSRLLIELSIFPYIYQETTLIIHSKDGYSNDFIQLTRHFYLNMA</sequence>
<dbReference type="EC" id="2.1.1.223" evidence="1"/>
<dbReference type="EMBL" id="FM178379">
    <property type="protein sequence ID" value="CAQ78244.1"/>
    <property type="molecule type" value="Genomic_DNA"/>
</dbReference>
<dbReference type="RefSeq" id="WP_012549368.1">
    <property type="nucleotide sequence ID" value="NC_011312.1"/>
</dbReference>
<dbReference type="SMR" id="B6EMW5"/>
<dbReference type="KEGG" id="vsa:VSAL_I0559"/>
<dbReference type="eggNOG" id="COG4123">
    <property type="taxonomic scope" value="Bacteria"/>
</dbReference>
<dbReference type="HOGENOM" id="CLU_061983_0_0_6"/>
<dbReference type="Proteomes" id="UP000001730">
    <property type="component" value="Chromosome 1"/>
</dbReference>
<dbReference type="GO" id="GO:0005737">
    <property type="term" value="C:cytoplasm"/>
    <property type="evidence" value="ECO:0007669"/>
    <property type="project" value="UniProtKB-SubCell"/>
</dbReference>
<dbReference type="GO" id="GO:0003676">
    <property type="term" value="F:nucleic acid binding"/>
    <property type="evidence" value="ECO:0007669"/>
    <property type="project" value="InterPro"/>
</dbReference>
<dbReference type="GO" id="GO:0016430">
    <property type="term" value="F:tRNA (adenine-N6)-methyltransferase activity"/>
    <property type="evidence" value="ECO:0007669"/>
    <property type="project" value="UniProtKB-UniRule"/>
</dbReference>
<dbReference type="GO" id="GO:0032259">
    <property type="term" value="P:methylation"/>
    <property type="evidence" value="ECO:0007669"/>
    <property type="project" value="UniProtKB-KW"/>
</dbReference>
<dbReference type="GO" id="GO:0008033">
    <property type="term" value="P:tRNA processing"/>
    <property type="evidence" value="ECO:0007669"/>
    <property type="project" value="UniProtKB-UniRule"/>
</dbReference>
<dbReference type="CDD" id="cd02440">
    <property type="entry name" value="AdoMet_MTases"/>
    <property type="match status" value="1"/>
</dbReference>
<dbReference type="Gene3D" id="3.40.50.150">
    <property type="entry name" value="Vaccinia Virus protein VP39"/>
    <property type="match status" value="1"/>
</dbReference>
<dbReference type="HAMAP" id="MF_01872">
    <property type="entry name" value="tRNA_methyltr_YfiC"/>
    <property type="match status" value="1"/>
</dbReference>
<dbReference type="InterPro" id="IPR002052">
    <property type="entry name" value="DNA_methylase_N6_adenine_CS"/>
</dbReference>
<dbReference type="InterPro" id="IPR029063">
    <property type="entry name" value="SAM-dependent_MTases_sf"/>
</dbReference>
<dbReference type="InterPro" id="IPR007848">
    <property type="entry name" value="Small_mtfrase_dom"/>
</dbReference>
<dbReference type="InterPro" id="IPR050210">
    <property type="entry name" value="tRNA_Adenine-N(6)_MTase"/>
</dbReference>
<dbReference type="InterPro" id="IPR022882">
    <property type="entry name" value="tRNA_adenine-N6_MeTrfase"/>
</dbReference>
<dbReference type="PANTHER" id="PTHR47739">
    <property type="entry name" value="TRNA1(VAL) (ADENINE(37)-N6)-METHYLTRANSFERASE"/>
    <property type="match status" value="1"/>
</dbReference>
<dbReference type="PANTHER" id="PTHR47739:SF1">
    <property type="entry name" value="TRNA1(VAL) (ADENINE(37)-N6)-METHYLTRANSFERASE"/>
    <property type="match status" value="1"/>
</dbReference>
<dbReference type="Pfam" id="PF05175">
    <property type="entry name" value="MTS"/>
    <property type="match status" value="1"/>
</dbReference>
<dbReference type="PRINTS" id="PR00507">
    <property type="entry name" value="N12N6MTFRASE"/>
</dbReference>
<dbReference type="SUPFAM" id="SSF53335">
    <property type="entry name" value="S-adenosyl-L-methionine-dependent methyltransferases"/>
    <property type="match status" value="1"/>
</dbReference>
<dbReference type="PROSITE" id="PS00092">
    <property type="entry name" value="N6_MTASE"/>
    <property type="match status" value="1"/>
</dbReference>
<proteinExistence type="inferred from homology"/>
<comment type="function">
    <text evidence="1">Specifically methylates the adenine in position 37 of tRNA(1)(Val) (anticodon cmo5UAC).</text>
</comment>
<comment type="catalytic activity">
    <reaction evidence="1">
        <text>adenosine(37) in tRNA1(Val) + S-adenosyl-L-methionine = N(6)-methyladenosine(37) in tRNA1(Val) + S-adenosyl-L-homocysteine + H(+)</text>
        <dbReference type="Rhea" id="RHEA:43160"/>
        <dbReference type="Rhea" id="RHEA-COMP:10369"/>
        <dbReference type="Rhea" id="RHEA-COMP:10370"/>
        <dbReference type="ChEBI" id="CHEBI:15378"/>
        <dbReference type="ChEBI" id="CHEBI:57856"/>
        <dbReference type="ChEBI" id="CHEBI:59789"/>
        <dbReference type="ChEBI" id="CHEBI:74411"/>
        <dbReference type="ChEBI" id="CHEBI:74449"/>
        <dbReference type="EC" id="2.1.1.223"/>
    </reaction>
</comment>
<comment type="subcellular location">
    <subcellularLocation>
        <location evidence="1">Cytoplasm</location>
    </subcellularLocation>
</comment>
<comment type="similarity">
    <text evidence="1">Belongs to the methyltransferase superfamily. tRNA (adenine-N(6)-)-methyltransferase family.</text>
</comment>
<organism>
    <name type="scientific">Aliivibrio salmonicida (strain LFI1238)</name>
    <name type="common">Vibrio salmonicida (strain LFI1238)</name>
    <dbReference type="NCBI Taxonomy" id="316275"/>
    <lineage>
        <taxon>Bacteria</taxon>
        <taxon>Pseudomonadati</taxon>
        <taxon>Pseudomonadota</taxon>
        <taxon>Gammaproteobacteria</taxon>
        <taxon>Vibrionales</taxon>
        <taxon>Vibrionaceae</taxon>
        <taxon>Aliivibrio</taxon>
    </lineage>
</organism>
<name>TRMN6_ALISL</name>
<reference key="1">
    <citation type="journal article" date="2008" name="BMC Genomics">
        <title>The genome sequence of the fish pathogen Aliivibrio salmonicida strain LFI1238 shows extensive evidence of gene decay.</title>
        <authorList>
            <person name="Hjerde E."/>
            <person name="Lorentzen M.S."/>
            <person name="Holden M.T."/>
            <person name="Seeger K."/>
            <person name="Paulsen S."/>
            <person name="Bason N."/>
            <person name="Churcher C."/>
            <person name="Harris D."/>
            <person name="Norbertczak H."/>
            <person name="Quail M.A."/>
            <person name="Sanders S."/>
            <person name="Thurston S."/>
            <person name="Parkhill J."/>
            <person name="Willassen N.P."/>
            <person name="Thomson N.R."/>
        </authorList>
    </citation>
    <scope>NUCLEOTIDE SEQUENCE [LARGE SCALE GENOMIC DNA]</scope>
    <source>
        <strain>LFI1238</strain>
    </source>
</reference>
<gene>
    <name type="ordered locus">VSAL_I0559</name>
</gene>
<protein>
    <recommendedName>
        <fullName evidence="1">tRNA1(Val) (adenine(37)-N6)-methyltransferase</fullName>
        <ecNumber evidence="1">2.1.1.223</ecNumber>
    </recommendedName>
    <alternativeName>
        <fullName evidence="1">tRNA m6A37 methyltransferase</fullName>
    </alternativeName>
</protein>
<evidence type="ECO:0000255" key="1">
    <source>
        <dbReference type="HAMAP-Rule" id="MF_01872"/>
    </source>
</evidence>
<accession>B6EMW5</accession>
<feature type="chain" id="PRO_0000387339" description="tRNA1(Val) (adenine(37)-N6)-methyltransferase">
    <location>
        <begin position="1"/>
        <end position="234"/>
    </location>
</feature>
<keyword id="KW-0963">Cytoplasm</keyword>
<keyword id="KW-0489">Methyltransferase</keyword>
<keyword id="KW-0949">S-adenosyl-L-methionine</keyword>
<keyword id="KW-0808">Transferase</keyword>
<keyword id="KW-0819">tRNA processing</keyword>